<name>FLGC_BUCAI</name>
<protein>
    <recommendedName>
        <fullName>Flagellar basal-body rod protein FlgC</fullName>
    </recommendedName>
</protein>
<proteinExistence type="inferred from homology"/>
<organism>
    <name type="scientific">Buchnera aphidicola subsp. Acyrthosiphon pisum (strain APS)</name>
    <name type="common">Acyrthosiphon pisum symbiotic bacterium</name>
    <dbReference type="NCBI Taxonomy" id="107806"/>
    <lineage>
        <taxon>Bacteria</taxon>
        <taxon>Pseudomonadati</taxon>
        <taxon>Pseudomonadota</taxon>
        <taxon>Gammaproteobacteria</taxon>
        <taxon>Enterobacterales</taxon>
        <taxon>Erwiniaceae</taxon>
        <taxon>Buchnera</taxon>
    </lineage>
</organism>
<comment type="subunit">
    <text evidence="1">The basal body constitutes a major portion of the flagellar organelle and consists of four rings (L,P,S, and M) mounted on a central rod. The rod consists of about 26 subunits of FlgG in the distal portion, and FlgB, FlgC and FlgF are thought to build up the proximal portion of the rod with about 6 subunits each (By similarity).</text>
</comment>
<comment type="subcellular location">
    <subcellularLocation>
        <location evidence="1">Bacterial flagellum basal body</location>
    </subcellularLocation>
</comment>
<comment type="similarity">
    <text evidence="2">Belongs to the flagella basal body rod proteins family.</text>
</comment>
<reference key="1">
    <citation type="journal article" date="2000" name="Nature">
        <title>Genome sequence of the endocellular bacterial symbiont of aphids Buchnera sp. APS.</title>
        <authorList>
            <person name="Shigenobu S."/>
            <person name="Watanabe H."/>
            <person name="Hattori M."/>
            <person name="Sakaki Y."/>
            <person name="Ishikawa H."/>
        </authorList>
    </citation>
    <scope>NUCLEOTIDE SEQUENCE [LARGE SCALE GENOMIC DNA]</scope>
    <source>
        <strain>APS</strain>
    </source>
</reference>
<evidence type="ECO:0000250" key="1"/>
<evidence type="ECO:0000305" key="2"/>
<accession>P57420</accession>
<feature type="chain" id="PRO_0000180800" description="Flagellar basal-body rod protein FlgC">
    <location>
        <begin position="1"/>
        <end position="136"/>
    </location>
</feature>
<gene>
    <name type="primary">flgC</name>
    <name type="ordered locus">BU338</name>
</gene>
<keyword id="KW-0975">Bacterial flagellum</keyword>
<keyword id="KW-1185">Reference proteome</keyword>
<sequence>MSLLNIFNIAGSAMIAQSQKLNVIASNLANMDSTIYKNGKFYPYIAKQVVFSLDTAKNSKIGGVKISAIIDDPSPMKLIYDPNNPMANNKGYILASNVNPITEMVNNIAAARSYQANIEVLKTAKSMIMKTLTISE</sequence>
<dbReference type="EMBL" id="BA000003">
    <property type="protein sequence ID" value="BAB13043.1"/>
    <property type="molecule type" value="Genomic_DNA"/>
</dbReference>
<dbReference type="RefSeq" id="NP_240157.1">
    <property type="nucleotide sequence ID" value="NC_002528.1"/>
</dbReference>
<dbReference type="RefSeq" id="WP_010896077.1">
    <property type="nucleotide sequence ID" value="NZ_AP036055.1"/>
</dbReference>
<dbReference type="SMR" id="P57420"/>
<dbReference type="STRING" id="563178.BUAP5A_332"/>
<dbReference type="EnsemblBacteria" id="BAB13043">
    <property type="protein sequence ID" value="BAB13043"/>
    <property type="gene ID" value="BAB13043"/>
</dbReference>
<dbReference type="KEGG" id="buc:BU338"/>
<dbReference type="PATRIC" id="fig|107806.10.peg.350"/>
<dbReference type="eggNOG" id="COG1558">
    <property type="taxonomic scope" value="Bacteria"/>
</dbReference>
<dbReference type="HOGENOM" id="CLU_123272_0_0_6"/>
<dbReference type="Proteomes" id="UP000001806">
    <property type="component" value="Chromosome"/>
</dbReference>
<dbReference type="GO" id="GO:0030694">
    <property type="term" value="C:bacterial-type flagellum basal body, rod"/>
    <property type="evidence" value="ECO:0007669"/>
    <property type="project" value="InterPro"/>
</dbReference>
<dbReference type="GO" id="GO:0071978">
    <property type="term" value="P:bacterial-type flagellum-dependent swarming motility"/>
    <property type="evidence" value="ECO:0007669"/>
    <property type="project" value="TreeGrafter"/>
</dbReference>
<dbReference type="InterPro" id="IPR001444">
    <property type="entry name" value="Flag_bb_rod_N"/>
</dbReference>
<dbReference type="InterPro" id="IPR019776">
    <property type="entry name" value="Flagellar_basal_body_rod_CS"/>
</dbReference>
<dbReference type="InterPro" id="IPR010930">
    <property type="entry name" value="Flg_bb/hook_C_dom"/>
</dbReference>
<dbReference type="InterPro" id="IPR006299">
    <property type="entry name" value="FlgC"/>
</dbReference>
<dbReference type="NCBIfam" id="TIGR01395">
    <property type="entry name" value="FlgC"/>
    <property type="match status" value="1"/>
</dbReference>
<dbReference type="PANTHER" id="PTHR30435:SF2">
    <property type="entry name" value="FLAGELLAR BASAL-BODY ROD PROTEIN FLGC"/>
    <property type="match status" value="1"/>
</dbReference>
<dbReference type="PANTHER" id="PTHR30435">
    <property type="entry name" value="FLAGELLAR PROTEIN"/>
    <property type="match status" value="1"/>
</dbReference>
<dbReference type="Pfam" id="PF00460">
    <property type="entry name" value="Flg_bb_rod"/>
    <property type="match status" value="1"/>
</dbReference>
<dbReference type="Pfam" id="PF06429">
    <property type="entry name" value="Flg_bbr_C"/>
    <property type="match status" value="1"/>
</dbReference>
<dbReference type="PROSITE" id="PS00588">
    <property type="entry name" value="FLAGELLA_BB_ROD"/>
    <property type="match status" value="1"/>
</dbReference>